<proteinExistence type="inferred from homology"/>
<gene>
    <name evidence="1" type="primary">hslV</name>
    <name type="ordered locus">CJE0765</name>
</gene>
<feature type="chain" id="PRO_1000012601" description="ATP-dependent protease subunit HslV">
    <location>
        <begin position="1"/>
        <end position="180"/>
    </location>
</feature>
<feature type="active site" evidence="1">
    <location>
        <position position="5"/>
    </location>
</feature>
<feature type="binding site" evidence="1">
    <location>
        <position position="161"/>
    </location>
    <ligand>
        <name>Na(+)</name>
        <dbReference type="ChEBI" id="CHEBI:29101"/>
    </ligand>
</feature>
<feature type="binding site" evidence="1">
    <location>
        <position position="164"/>
    </location>
    <ligand>
        <name>Na(+)</name>
        <dbReference type="ChEBI" id="CHEBI:29101"/>
    </ligand>
</feature>
<feature type="binding site" evidence="1">
    <location>
        <position position="167"/>
    </location>
    <ligand>
        <name>Na(+)</name>
        <dbReference type="ChEBI" id="CHEBI:29101"/>
    </ligand>
</feature>
<accession>Q5HVB1</accession>
<dbReference type="EC" id="3.4.25.2" evidence="1"/>
<dbReference type="EMBL" id="CP000025">
    <property type="protein sequence ID" value="AAW34556.1"/>
    <property type="molecule type" value="Genomic_DNA"/>
</dbReference>
<dbReference type="RefSeq" id="WP_002781630.1">
    <property type="nucleotide sequence ID" value="NC_003912.7"/>
</dbReference>
<dbReference type="SMR" id="Q5HVB1"/>
<dbReference type="KEGG" id="cjr:CJE0765"/>
<dbReference type="HOGENOM" id="CLU_093872_1_1_7"/>
<dbReference type="GO" id="GO:0009376">
    <property type="term" value="C:HslUV protease complex"/>
    <property type="evidence" value="ECO:0007669"/>
    <property type="project" value="UniProtKB-UniRule"/>
</dbReference>
<dbReference type="GO" id="GO:0005839">
    <property type="term" value="C:proteasome core complex"/>
    <property type="evidence" value="ECO:0007669"/>
    <property type="project" value="InterPro"/>
</dbReference>
<dbReference type="GO" id="GO:0046872">
    <property type="term" value="F:metal ion binding"/>
    <property type="evidence" value="ECO:0007669"/>
    <property type="project" value="UniProtKB-KW"/>
</dbReference>
<dbReference type="GO" id="GO:0004298">
    <property type="term" value="F:threonine-type endopeptidase activity"/>
    <property type="evidence" value="ECO:0007669"/>
    <property type="project" value="UniProtKB-KW"/>
</dbReference>
<dbReference type="GO" id="GO:0051603">
    <property type="term" value="P:proteolysis involved in protein catabolic process"/>
    <property type="evidence" value="ECO:0007669"/>
    <property type="project" value="InterPro"/>
</dbReference>
<dbReference type="CDD" id="cd01913">
    <property type="entry name" value="protease_HslV"/>
    <property type="match status" value="1"/>
</dbReference>
<dbReference type="Gene3D" id="3.60.20.10">
    <property type="entry name" value="Glutamine Phosphoribosylpyrophosphate, subunit 1, domain 1"/>
    <property type="match status" value="1"/>
</dbReference>
<dbReference type="HAMAP" id="MF_00248">
    <property type="entry name" value="HslV"/>
    <property type="match status" value="1"/>
</dbReference>
<dbReference type="InterPro" id="IPR022281">
    <property type="entry name" value="ATP-dep_Prtase_HsIV_su"/>
</dbReference>
<dbReference type="InterPro" id="IPR029055">
    <property type="entry name" value="Ntn_hydrolases_N"/>
</dbReference>
<dbReference type="InterPro" id="IPR001353">
    <property type="entry name" value="Proteasome_sua/b"/>
</dbReference>
<dbReference type="InterPro" id="IPR023333">
    <property type="entry name" value="Proteasome_suB-type"/>
</dbReference>
<dbReference type="NCBIfam" id="TIGR03692">
    <property type="entry name" value="ATP_dep_HslV"/>
    <property type="match status" value="1"/>
</dbReference>
<dbReference type="NCBIfam" id="NF003964">
    <property type="entry name" value="PRK05456.1"/>
    <property type="match status" value="1"/>
</dbReference>
<dbReference type="PANTHER" id="PTHR32194:SF0">
    <property type="entry name" value="ATP-DEPENDENT PROTEASE SUBUNIT HSLV"/>
    <property type="match status" value="1"/>
</dbReference>
<dbReference type="PANTHER" id="PTHR32194">
    <property type="entry name" value="METALLOPROTEASE TLDD"/>
    <property type="match status" value="1"/>
</dbReference>
<dbReference type="Pfam" id="PF00227">
    <property type="entry name" value="Proteasome"/>
    <property type="match status" value="1"/>
</dbReference>
<dbReference type="PIRSF" id="PIRSF039093">
    <property type="entry name" value="HslV"/>
    <property type="match status" value="1"/>
</dbReference>
<dbReference type="SUPFAM" id="SSF56235">
    <property type="entry name" value="N-terminal nucleophile aminohydrolases (Ntn hydrolases)"/>
    <property type="match status" value="1"/>
</dbReference>
<dbReference type="PROSITE" id="PS51476">
    <property type="entry name" value="PROTEASOME_BETA_2"/>
    <property type="match status" value="1"/>
</dbReference>
<evidence type="ECO:0000255" key="1">
    <source>
        <dbReference type="HAMAP-Rule" id="MF_00248"/>
    </source>
</evidence>
<protein>
    <recommendedName>
        <fullName evidence="1">ATP-dependent protease subunit HslV</fullName>
        <ecNumber evidence="1">3.4.25.2</ecNumber>
    </recommendedName>
</protein>
<organism>
    <name type="scientific">Campylobacter jejuni (strain RM1221)</name>
    <dbReference type="NCBI Taxonomy" id="195099"/>
    <lineage>
        <taxon>Bacteria</taxon>
        <taxon>Pseudomonadati</taxon>
        <taxon>Campylobacterota</taxon>
        <taxon>Epsilonproteobacteria</taxon>
        <taxon>Campylobacterales</taxon>
        <taxon>Campylobacteraceae</taxon>
        <taxon>Campylobacter</taxon>
    </lineage>
</organism>
<sequence length="180" mass="19592">MFHATTILAYKGKNKSVIGGDGQVSFGNTVLKGNAVKIRKLNNGKVLAGFAGSTADAFNLFDMFENLLQSSKGDLLKAAIDFSKEWRKDKYLRKLEAMMLVLDRNHIFLLSGTGDVVEPEDGQIAAIGSGGNYALSAARALAKHTDLDEEELVKSSLQIAGEICIYTNTNIKTYVIEDEK</sequence>
<keyword id="KW-0021">Allosteric enzyme</keyword>
<keyword id="KW-0963">Cytoplasm</keyword>
<keyword id="KW-0378">Hydrolase</keyword>
<keyword id="KW-0479">Metal-binding</keyword>
<keyword id="KW-0645">Protease</keyword>
<keyword id="KW-0915">Sodium</keyword>
<keyword id="KW-0888">Threonine protease</keyword>
<comment type="function">
    <text evidence="1">Protease subunit of a proteasome-like degradation complex believed to be a general protein degrading machinery.</text>
</comment>
<comment type="catalytic activity">
    <reaction evidence="1">
        <text>ATP-dependent cleavage of peptide bonds with broad specificity.</text>
        <dbReference type="EC" id="3.4.25.2"/>
    </reaction>
</comment>
<comment type="activity regulation">
    <text evidence="1">Allosterically activated by HslU binding.</text>
</comment>
<comment type="subunit">
    <text evidence="1">A double ring-shaped homohexamer of HslV is capped on each side by a ring-shaped HslU homohexamer. The assembly of the HslU/HslV complex is dependent on binding of ATP.</text>
</comment>
<comment type="subcellular location">
    <subcellularLocation>
        <location evidence="1">Cytoplasm</location>
    </subcellularLocation>
</comment>
<comment type="similarity">
    <text evidence="1">Belongs to the peptidase T1B family. HslV subfamily.</text>
</comment>
<reference key="1">
    <citation type="journal article" date="2005" name="PLoS Biol.">
        <title>Major structural differences and novel potential virulence mechanisms from the genomes of multiple Campylobacter species.</title>
        <authorList>
            <person name="Fouts D.E."/>
            <person name="Mongodin E.F."/>
            <person name="Mandrell R.E."/>
            <person name="Miller W.G."/>
            <person name="Rasko D.A."/>
            <person name="Ravel J."/>
            <person name="Brinkac L.M."/>
            <person name="DeBoy R.T."/>
            <person name="Parker C.T."/>
            <person name="Daugherty S.C."/>
            <person name="Dodson R.J."/>
            <person name="Durkin A.S."/>
            <person name="Madupu R."/>
            <person name="Sullivan S.A."/>
            <person name="Shetty J.U."/>
            <person name="Ayodeji M.A."/>
            <person name="Shvartsbeyn A."/>
            <person name="Schatz M.C."/>
            <person name="Badger J.H."/>
            <person name="Fraser C.M."/>
            <person name="Nelson K.E."/>
        </authorList>
    </citation>
    <scope>NUCLEOTIDE SEQUENCE [LARGE SCALE GENOMIC DNA]</scope>
    <source>
        <strain>RM1221</strain>
    </source>
</reference>
<name>HSLV_CAMJR</name>